<comment type="function">
    <text evidence="1">Catalyzes the methylation of C-15 in cobalt-precorrin-6B followed by the decarboxylation of C-12 to form cobalt-precorrin-7.</text>
</comment>
<comment type="catalytic activity">
    <reaction evidence="1">
        <text>Co-precorrin-6B + S-adenosyl-L-methionine = Co-precorrin-7 + S-adenosyl-L-homocysteine + CO2</text>
        <dbReference type="Rhea" id="RHEA:36067"/>
        <dbReference type="ChEBI" id="CHEBI:16526"/>
        <dbReference type="ChEBI" id="CHEBI:57856"/>
        <dbReference type="ChEBI" id="CHEBI:59789"/>
        <dbReference type="ChEBI" id="CHEBI:70791"/>
        <dbReference type="ChEBI" id="CHEBI:72780"/>
        <dbReference type="EC" id="2.1.1.196"/>
    </reaction>
</comment>
<comment type="pathway">
    <text evidence="1">Cofactor biosynthesis; adenosylcobalamin biosynthesis; cob(II)yrinate a,c-diamide from sirohydrochlorin (anaerobic route): step 8/10.</text>
</comment>
<comment type="similarity">
    <text evidence="1">Belongs to the methyltransferase superfamily. Archaeal-type CbiT family.</text>
</comment>
<keyword id="KW-0169">Cobalamin biosynthesis</keyword>
<keyword id="KW-0489">Methyltransferase</keyword>
<keyword id="KW-0949">S-adenosyl-L-methionine</keyword>
<keyword id="KW-0808">Transferase</keyword>
<reference key="1">
    <citation type="journal article" date="2009" name="Proc. Natl. Acad. Sci. U.S.A.">
        <title>Biogeography of the Sulfolobus islandicus pan-genome.</title>
        <authorList>
            <person name="Reno M.L."/>
            <person name="Held N.L."/>
            <person name="Fields C.J."/>
            <person name="Burke P.V."/>
            <person name="Whitaker R.J."/>
        </authorList>
    </citation>
    <scope>NUCLEOTIDE SEQUENCE [LARGE SCALE GENOMIC DNA]</scope>
    <source>
        <strain>Y.N.15.51 / Yellowstone #2</strain>
    </source>
</reference>
<gene>
    <name evidence="1" type="primary">cbiT</name>
    <name type="ordered locus">YN1551_0110</name>
</gene>
<organism>
    <name type="scientific">Saccharolobus islandicus (strain Y.N.15.51 / Yellowstone #2)</name>
    <name type="common">Sulfolobus islandicus</name>
    <dbReference type="NCBI Taxonomy" id="419942"/>
    <lineage>
        <taxon>Archaea</taxon>
        <taxon>Thermoproteota</taxon>
        <taxon>Thermoprotei</taxon>
        <taxon>Sulfolobales</taxon>
        <taxon>Sulfolobaceae</taxon>
        <taxon>Saccharolobus</taxon>
    </lineage>
</organism>
<evidence type="ECO:0000255" key="1">
    <source>
        <dbReference type="HAMAP-Rule" id="MF_00786"/>
    </source>
</evidence>
<feature type="chain" id="PRO_1000212933" description="Probable cobalt-precorrin-6B C(15)-methyltransferase (decarboxylating)">
    <location>
        <begin position="1"/>
        <end position="199"/>
    </location>
</feature>
<feature type="binding site" evidence="1">
    <location>
        <position position="24"/>
    </location>
    <ligand>
        <name>S-adenosyl-L-methionine</name>
        <dbReference type="ChEBI" id="CHEBI:59789"/>
    </ligand>
</feature>
<feature type="binding site" evidence="1">
    <location>
        <begin position="48"/>
        <end position="52"/>
    </location>
    <ligand>
        <name>S-adenosyl-L-methionine</name>
        <dbReference type="ChEBI" id="CHEBI:59789"/>
    </ligand>
</feature>
<feature type="binding site" evidence="1">
    <location>
        <position position="72"/>
    </location>
    <ligand>
        <name>S-adenosyl-L-methionine</name>
        <dbReference type="ChEBI" id="CHEBI:59789"/>
    </ligand>
</feature>
<feature type="binding site" evidence="1">
    <location>
        <position position="101"/>
    </location>
    <ligand>
        <name>S-adenosyl-L-methionine</name>
        <dbReference type="ChEBI" id="CHEBI:59789"/>
    </ligand>
</feature>
<dbReference type="EC" id="2.1.1.196" evidence="1"/>
<dbReference type="EMBL" id="CP001404">
    <property type="protein sequence ID" value="ACP47307.1"/>
    <property type="molecule type" value="Genomic_DNA"/>
</dbReference>
<dbReference type="RefSeq" id="WP_012716954.1">
    <property type="nucleotide sequence ID" value="NC_012623.1"/>
</dbReference>
<dbReference type="SMR" id="C3NJQ5"/>
<dbReference type="GeneID" id="7811484"/>
<dbReference type="KEGG" id="sin:YN1551_0110"/>
<dbReference type="HOGENOM" id="CLU_094143_0_0_2"/>
<dbReference type="UniPathway" id="UPA00148">
    <property type="reaction ID" value="UER00229"/>
</dbReference>
<dbReference type="Proteomes" id="UP000006818">
    <property type="component" value="Chromosome"/>
</dbReference>
<dbReference type="GO" id="GO:0043776">
    <property type="term" value="F:cobalt-precorrin-6B C5-methyltransferase activity"/>
    <property type="evidence" value="ECO:0007669"/>
    <property type="project" value="RHEA"/>
</dbReference>
<dbReference type="GO" id="GO:0008276">
    <property type="term" value="F:protein methyltransferase activity"/>
    <property type="evidence" value="ECO:0007669"/>
    <property type="project" value="InterPro"/>
</dbReference>
<dbReference type="GO" id="GO:0019251">
    <property type="term" value="P:anaerobic cobalamin biosynthetic process"/>
    <property type="evidence" value="ECO:0007669"/>
    <property type="project" value="UniProtKB-UniRule"/>
</dbReference>
<dbReference type="GO" id="GO:0032259">
    <property type="term" value="P:methylation"/>
    <property type="evidence" value="ECO:0007669"/>
    <property type="project" value="UniProtKB-KW"/>
</dbReference>
<dbReference type="CDD" id="cd02440">
    <property type="entry name" value="AdoMet_MTases"/>
    <property type="match status" value="1"/>
</dbReference>
<dbReference type="Gene3D" id="3.40.50.150">
    <property type="entry name" value="Vaccinia Virus protein VP39"/>
    <property type="match status" value="1"/>
</dbReference>
<dbReference type="HAMAP" id="MF_00786">
    <property type="entry name" value="CbiT"/>
    <property type="match status" value="1"/>
</dbReference>
<dbReference type="InterPro" id="IPR023475">
    <property type="entry name" value="CbiT"/>
</dbReference>
<dbReference type="InterPro" id="IPR014008">
    <property type="entry name" value="Cbl_synth_MTase_CbiT"/>
</dbReference>
<dbReference type="InterPro" id="IPR050714">
    <property type="entry name" value="Cobalamin_biosynth_MTase"/>
</dbReference>
<dbReference type="InterPro" id="IPR025714">
    <property type="entry name" value="Methyltranfer_dom"/>
</dbReference>
<dbReference type="InterPro" id="IPR029063">
    <property type="entry name" value="SAM-dependent_MTases_sf"/>
</dbReference>
<dbReference type="NCBIfam" id="TIGR02469">
    <property type="entry name" value="CbiT"/>
    <property type="match status" value="1"/>
</dbReference>
<dbReference type="NCBIfam" id="NF001556">
    <property type="entry name" value="PRK00377.1"/>
    <property type="match status" value="1"/>
</dbReference>
<dbReference type="PANTHER" id="PTHR43182">
    <property type="entry name" value="COBALT-PRECORRIN-6B C(15)-METHYLTRANSFERASE (DECARBOXYLATING)"/>
    <property type="match status" value="1"/>
</dbReference>
<dbReference type="PANTHER" id="PTHR43182:SF1">
    <property type="entry name" value="COBALT-PRECORRIN-7 C(5)-METHYLTRANSFERASE"/>
    <property type="match status" value="1"/>
</dbReference>
<dbReference type="Pfam" id="PF13847">
    <property type="entry name" value="Methyltransf_31"/>
    <property type="match status" value="1"/>
</dbReference>
<dbReference type="SUPFAM" id="SSF53335">
    <property type="entry name" value="S-adenosyl-L-methionine-dependent methyltransferases"/>
    <property type="match status" value="1"/>
</dbReference>
<proteinExistence type="inferred from homology"/>
<protein>
    <recommendedName>
        <fullName evidence="1">Probable cobalt-precorrin-6B C(15)-methyltransferase (decarboxylating)</fullName>
        <ecNumber evidence="1">2.1.1.196</ecNumber>
    </recommendedName>
</protein>
<name>CBIT_SACI1</name>
<accession>C3NJQ5</accession>
<sequence>MEWKYVIPGIPDNFFERDEEIPMTKEEIRALALSKLRIRKGDMILDIGCGTGSVTVEASLLVGSTGKVYGVDKEEKAINLTRRNAEKFGVLNNIVLIKGEAPEILFTINEKFDRIFIGGGSEKIKEIISASWEIIKKGGRVVIDAILLETVNNAISAMENIGFINLEITEVIIAKGMKTKVGTAMMTRNPIFIISGEKQ</sequence>